<comment type="function">
    <text evidence="1">Forms a portal in the viral capsid through which viral DNA is translocated during DNA packaging. Assembles as a dodecamer at a single fivefold axe of the T=16 icosahedric capsid. Binds to the molecular motor that translocates the viral DNA, termed terminase.</text>
</comment>
<comment type="subunit">
    <text evidence="1">Homododecamerizes. Interacts with terminase subunits TRM1 and TRM3.</text>
</comment>
<comment type="subcellular location">
    <subcellularLocation>
        <location evidence="1">Virion</location>
    </subcellularLocation>
    <subcellularLocation>
        <location evidence="1">Host nucleus</location>
    </subcellularLocation>
</comment>
<comment type="similarity">
    <text evidence="1">Belongs to the herpesviridae portal protein family.</text>
</comment>
<protein>
    <recommendedName>
        <fullName evidence="1">Portal protein</fullName>
    </recommendedName>
</protein>
<proteinExistence type="inferred from homology"/>
<dbReference type="EMBL" id="AY372243">
    <property type="protein sequence ID" value="AAQ73740.1"/>
    <property type="molecule type" value="Genomic_DNA"/>
</dbReference>
<dbReference type="RefSeq" id="NP_944434.1">
    <property type="nucleotide sequence ID" value="NC_005264.1"/>
</dbReference>
<dbReference type="GeneID" id="2656990"/>
<dbReference type="KEGG" id="vg:2656990"/>
<dbReference type="Proteomes" id="UP000006840">
    <property type="component" value="Segment"/>
</dbReference>
<dbReference type="GO" id="GO:0042025">
    <property type="term" value="C:host cell nucleus"/>
    <property type="evidence" value="ECO:0007669"/>
    <property type="project" value="UniProtKB-SubCell"/>
</dbReference>
<dbReference type="GO" id="GO:0044423">
    <property type="term" value="C:virion component"/>
    <property type="evidence" value="ECO:0007669"/>
    <property type="project" value="UniProtKB-KW"/>
</dbReference>
<dbReference type="GO" id="GO:0051276">
    <property type="term" value="P:chromosome organization"/>
    <property type="evidence" value="ECO:0007669"/>
    <property type="project" value="InterPro"/>
</dbReference>
<dbReference type="HAMAP" id="MF_04012">
    <property type="entry name" value="HSV_PORTL"/>
    <property type="match status" value="1"/>
</dbReference>
<dbReference type="InterPro" id="IPR002660">
    <property type="entry name" value="Herpes_Portal"/>
</dbReference>
<dbReference type="Pfam" id="PF01763">
    <property type="entry name" value="Herpes_UL6"/>
    <property type="match status" value="1"/>
</dbReference>
<feature type="chain" id="PRO_0000406840" description="Portal protein">
    <location>
        <begin position="1"/>
        <end position="782"/>
    </location>
</feature>
<feature type="region of interest" description="Putative leucine zipper motif" evidence="1">
    <location>
        <begin position="448"/>
        <end position="469"/>
    </location>
</feature>
<feature type="region of interest" description="Disordered" evidence="2">
    <location>
        <begin position="735"/>
        <end position="782"/>
    </location>
</feature>
<feature type="compositionally biased region" description="Basic and acidic residues" evidence="2">
    <location>
        <begin position="735"/>
        <end position="752"/>
    </location>
</feature>
<feature type="compositionally biased region" description="Basic residues" evidence="2">
    <location>
        <begin position="772"/>
        <end position="782"/>
    </location>
</feature>
<feature type="disulfide bond" description="Interchain" evidence="1">
    <location>
        <position position="185"/>
    </location>
</feature>
<feature type="disulfide bond" description="Interchain" evidence="1">
    <location>
        <position position="279"/>
    </location>
</feature>
<sequence>MEGGCSFAQNLRFGEGREASRRPPVMETLEIIDPTLSTGNDGGEWLLIHPTQRTMGFREVLLGAPAYSPGHGIYNAVRATSTVIRQVQASVLRNILDGVAFEDLADDWRAHISARGFAPGDLAEKYWLEPADAVRVAENATETWSFLLRNLLLDFVRRVAEYCIDGMGGADGTAAYARYVDWLTCLGIVPVIREGDVADDSAGKGTERFVADTEWDLSMQNRLRLAPAITRRGYDMLGCLERCFRAARVMNYDRTVVIMHSATRELRAYDVHTRERGGCVVAWDPMLTERGIVFDSPMQRLYAAVLRTQAVREHAKLCQLANTAPVSVLVARREDKVAADPAGVSKLVDKALGEGAEEAGQSAAAKLIKFIIDMQNMRKVGDVAEVVDAYLRESGGPAIDKTFSLDPGRAGFGGNGKSAQGLLGQQGQPNQPKDGVASVMRDAVNTSVGKVVNNLFKAVSDLKSANADLTRRNAHIAKELTESRRRIGALTSAAARDNSNGSSRYDAPDAWRVLDEKDARWEMGDTLLSLGNLPESVTMNKVDLSGEMTEDQYVANSFFSRYVPPYLEEESRLSALWERELLRVFKMHRVTNNQGDEVSISYSNSSISLIVGPFFHRVLKATRLGFLVADDEAYKSEEELCESLFKKSRVDAYLRDLKTTYLADVRNACAIRKIRQEPFLREPQDVSGEFERAGVGADYIDGAETAPWPGDDTRKKWDLANRGLCRGGPARQRVEWERGEDHGQLGERDVRRSVPRWWRTTPYPTREDQRSGRGRRGMRQLR</sequence>
<keyword id="KW-1015">Disulfide bond</keyword>
<keyword id="KW-1048">Host nucleus</keyword>
<keyword id="KW-1185">Reference proteome</keyword>
<keyword id="KW-0231">Viral genome packaging</keyword>
<keyword id="KW-1188">Viral release from host cell</keyword>
<keyword id="KW-0946">Virion</keyword>
<organism>
    <name type="scientific">Psittacid herpesvirus 1 (isolate Amazon parrot/-/97-0001/1997)</name>
    <name type="common">PsHV-1</name>
    <name type="synonym">Pacheco's disease virus</name>
    <dbReference type="NCBI Taxonomy" id="670426"/>
    <lineage>
        <taxon>Viruses</taxon>
        <taxon>Duplodnaviria</taxon>
        <taxon>Heunggongvirae</taxon>
        <taxon>Peploviricota</taxon>
        <taxon>Herviviricetes</taxon>
        <taxon>Herpesvirales</taxon>
        <taxon>Orthoherpesviridae</taxon>
        <taxon>Alphaherpesvirinae</taxon>
        <taxon>Iltovirus</taxon>
        <taxon>Iltovirus psittacidalpha1</taxon>
        <taxon>Psittacid alphaherpesvirus 1</taxon>
    </lineage>
</organism>
<reference key="1">
    <citation type="journal article" date="2006" name="J. Virol.">
        <title>Psittacid herpesvirus 1 and infectious laryngotracheitis virus: Comparative genome sequence analysis of two avian alphaherpesviruses.</title>
        <authorList>
            <person name="Thureen D.R."/>
            <person name="Keeler C.L. Jr."/>
        </authorList>
    </citation>
    <scope>NUCLEOTIDE SEQUENCE [LARGE SCALE GENOMIC DNA]</scope>
</reference>
<accession>Q6UDH0</accession>
<evidence type="ECO:0000255" key="1">
    <source>
        <dbReference type="HAMAP-Rule" id="MF_04012"/>
    </source>
</evidence>
<evidence type="ECO:0000256" key="2">
    <source>
        <dbReference type="SAM" id="MobiDB-lite"/>
    </source>
</evidence>
<gene>
    <name type="primary">UL6</name>
</gene>
<organismHost>
    <name type="scientific">Amazona oratrix</name>
    <name type="common">yellow-headed parrot</name>
    <dbReference type="NCBI Taxonomy" id="152276"/>
</organismHost>
<name>PORTL_PSHV1</name>